<accession>A8GAN8</accession>
<reference key="1">
    <citation type="submission" date="2007-09" db="EMBL/GenBank/DDBJ databases">
        <title>Complete sequence of chromosome of Serratia proteamaculans 568.</title>
        <authorList>
            <consortium name="US DOE Joint Genome Institute"/>
            <person name="Copeland A."/>
            <person name="Lucas S."/>
            <person name="Lapidus A."/>
            <person name="Barry K."/>
            <person name="Glavina del Rio T."/>
            <person name="Dalin E."/>
            <person name="Tice H."/>
            <person name="Pitluck S."/>
            <person name="Chain P."/>
            <person name="Malfatti S."/>
            <person name="Shin M."/>
            <person name="Vergez L."/>
            <person name="Schmutz J."/>
            <person name="Larimer F."/>
            <person name="Land M."/>
            <person name="Hauser L."/>
            <person name="Kyrpides N."/>
            <person name="Kim E."/>
            <person name="Taghavi S."/>
            <person name="Newman L."/>
            <person name="Vangronsveld J."/>
            <person name="van der Lelie D."/>
            <person name="Richardson P."/>
        </authorList>
    </citation>
    <scope>NUCLEOTIDE SEQUENCE [LARGE SCALE GENOMIC DNA]</scope>
    <source>
        <strain>568</strain>
    </source>
</reference>
<dbReference type="EMBL" id="CP000826">
    <property type="protein sequence ID" value="ABV40178.1"/>
    <property type="molecule type" value="Genomic_DNA"/>
</dbReference>
<dbReference type="SMR" id="A8GAN8"/>
<dbReference type="STRING" id="399741.Spro_1074"/>
<dbReference type="KEGG" id="spe:Spro_1074"/>
<dbReference type="eggNOG" id="COG0781">
    <property type="taxonomic scope" value="Bacteria"/>
</dbReference>
<dbReference type="HOGENOM" id="CLU_087843_4_1_6"/>
<dbReference type="OrthoDB" id="9789556at2"/>
<dbReference type="GO" id="GO:0005829">
    <property type="term" value="C:cytosol"/>
    <property type="evidence" value="ECO:0007669"/>
    <property type="project" value="TreeGrafter"/>
</dbReference>
<dbReference type="GO" id="GO:0003723">
    <property type="term" value="F:RNA binding"/>
    <property type="evidence" value="ECO:0007669"/>
    <property type="project" value="UniProtKB-UniRule"/>
</dbReference>
<dbReference type="GO" id="GO:0006353">
    <property type="term" value="P:DNA-templated transcription termination"/>
    <property type="evidence" value="ECO:0007669"/>
    <property type="project" value="UniProtKB-UniRule"/>
</dbReference>
<dbReference type="GO" id="GO:0031564">
    <property type="term" value="P:transcription antitermination"/>
    <property type="evidence" value="ECO:0007669"/>
    <property type="project" value="UniProtKB-KW"/>
</dbReference>
<dbReference type="CDD" id="cd00619">
    <property type="entry name" value="Terminator_NusB"/>
    <property type="match status" value="1"/>
</dbReference>
<dbReference type="FunFam" id="1.10.940.10:FF:000001">
    <property type="entry name" value="Transcription antitermination factor NusB"/>
    <property type="match status" value="1"/>
</dbReference>
<dbReference type="Gene3D" id="1.10.940.10">
    <property type="entry name" value="NusB-like"/>
    <property type="match status" value="1"/>
</dbReference>
<dbReference type="HAMAP" id="MF_00073">
    <property type="entry name" value="NusB"/>
    <property type="match status" value="1"/>
</dbReference>
<dbReference type="InterPro" id="IPR035926">
    <property type="entry name" value="NusB-like_sf"/>
</dbReference>
<dbReference type="InterPro" id="IPR011605">
    <property type="entry name" value="NusB_fam"/>
</dbReference>
<dbReference type="InterPro" id="IPR006027">
    <property type="entry name" value="NusB_RsmB_TIM44"/>
</dbReference>
<dbReference type="NCBIfam" id="TIGR01951">
    <property type="entry name" value="nusB"/>
    <property type="match status" value="1"/>
</dbReference>
<dbReference type="PANTHER" id="PTHR11078:SF3">
    <property type="entry name" value="ANTITERMINATION NUSB DOMAIN-CONTAINING PROTEIN"/>
    <property type="match status" value="1"/>
</dbReference>
<dbReference type="PANTHER" id="PTHR11078">
    <property type="entry name" value="N UTILIZATION SUBSTANCE PROTEIN B-RELATED"/>
    <property type="match status" value="1"/>
</dbReference>
<dbReference type="Pfam" id="PF01029">
    <property type="entry name" value="NusB"/>
    <property type="match status" value="1"/>
</dbReference>
<dbReference type="SUPFAM" id="SSF48013">
    <property type="entry name" value="NusB-like"/>
    <property type="match status" value="1"/>
</dbReference>
<evidence type="ECO:0000255" key="1">
    <source>
        <dbReference type="HAMAP-Rule" id="MF_00073"/>
    </source>
</evidence>
<organism>
    <name type="scientific">Serratia proteamaculans (strain 568)</name>
    <dbReference type="NCBI Taxonomy" id="399741"/>
    <lineage>
        <taxon>Bacteria</taxon>
        <taxon>Pseudomonadati</taxon>
        <taxon>Pseudomonadota</taxon>
        <taxon>Gammaproteobacteria</taxon>
        <taxon>Enterobacterales</taxon>
        <taxon>Yersiniaceae</taxon>
        <taxon>Serratia</taxon>
    </lineage>
</organism>
<sequence length="138" mass="15584">MKPAARRRARECAVQALYSWQLSKNDIADVEHQFLSEQDVKDVDIVYFRELLSGVAVNAGLLDSLMAPVLSRQLEELGQVERAVLRIALYELKMREDVPYKVAINEAIELAKTFGAEDSHKFVNGVLDKVAPSIRKKK</sequence>
<keyword id="KW-0694">RNA-binding</keyword>
<keyword id="KW-0804">Transcription</keyword>
<keyword id="KW-0889">Transcription antitermination</keyword>
<keyword id="KW-0805">Transcription regulation</keyword>
<comment type="function">
    <text evidence="1">Involved in transcription antitermination. Required for transcription of ribosomal RNA (rRNA) genes. Binds specifically to the boxA antiterminator sequence of the ribosomal RNA (rrn) operons.</text>
</comment>
<comment type="similarity">
    <text evidence="1">Belongs to the NusB family.</text>
</comment>
<feature type="chain" id="PRO_1000057501" description="Transcription antitermination protein NusB">
    <location>
        <begin position="1"/>
        <end position="138"/>
    </location>
</feature>
<protein>
    <recommendedName>
        <fullName evidence="1">Transcription antitermination protein NusB</fullName>
    </recommendedName>
    <alternativeName>
        <fullName evidence="1">Antitermination factor NusB</fullName>
    </alternativeName>
</protein>
<proteinExistence type="inferred from homology"/>
<name>NUSB_SERP5</name>
<gene>
    <name evidence="1" type="primary">nusB</name>
    <name type="ordered locus">Spro_1074</name>
</gene>